<proteinExistence type="evidence at protein level"/>
<protein>
    <recommendedName>
        <fullName evidence="1">DNA-directed RNA polymerase subunit omega</fullName>
        <shortName evidence="1">RNAP omega subunit</shortName>
        <ecNumber evidence="1">2.7.7.6</ecNumber>
    </recommendedName>
    <alternativeName>
        <fullName evidence="1">RNA polymerase omega subunit</fullName>
    </alternativeName>
    <alternativeName>
        <fullName evidence="1">Transcriptase subunit omega</fullName>
    </alternativeName>
</protein>
<evidence type="ECO:0000255" key="1">
    <source>
        <dbReference type="HAMAP-Rule" id="MF_00366"/>
    </source>
</evidence>
<evidence type="ECO:0000305" key="2"/>
<evidence type="ECO:0007829" key="3">
    <source>
        <dbReference type="PDB" id="2A6H"/>
    </source>
</evidence>
<evidence type="ECO:0007829" key="4">
    <source>
        <dbReference type="PDB" id="6KQF"/>
    </source>
</evidence>
<sequence length="99" mass="11517">MAEPGIDKLFGMVDSKYRLTVVVAKRAQQLLRHGFKNTVLEPEERPKMQTLEGLFDDPNAVTWAMKELLTGRLVFGENLVPEDRLQKEMERLYPVEREE</sequence>
<keyword id="KW-0002">3D-structure</keyword>
<keyword id="KW-0240">DNA-directed RNA polymerase</keyword>
<keyword id="KW-0548">Nucleotidyltransferase</keyword>
<keyword id="KW-1185">Reference proteome</keyword>
<keyword id="KW-0804">Transcription</keyword>
<keyword id="KW-0808">Transferase</keyword>
<reference key="1">
    <citation type="journal article" date="2002" name="Acta Crystallogr. D">
        <title>Purification, crystallization and initial crystallographic analysis of RNA polymerase holoenzyme from Thermus thermophilus.</title>
        <authorList>
            <person name="Vassylyeva M.N."/>
            <person name="Lee J."/>
            <person name="Sekine S.I."/>
            <person name="Laptenko O."/>
            <person name="Kuramitsu S."/>
            <person name="Shibata T."/>
            <person name="Inoue Y."/>
            <person name="Borukhov S."/>
            <person name="Vassylyev D.G."/>
            <person name="Yokoyama S."/>
        </authorList>
    </citation>
    <scope>NUCLEOTIDE SEQUENCE [GENOMIC DNA]</scope>
</reference>
<reference key="2">
    <citation type="submission" date="2004-11" db="EMBL/GenBank/DDBJ databases">
        <title>Complete genome sequence of Thermus thermophilus HB8.</title>
        <authorList>
            <person name="Masui R."/>
            <person name="Kurokawa K."/>
            <person name="Nakagawa N."/>
            <person name="Tokunaga F."/>
            <person name="Koyama Y."/>
            <person name="Shibata T."/>
            <person name="Oshima T."/>
            <person name="Yokoyama S."/>
            <person name="Yasunaga T."/>
            <person name="Kuramitsu S."/>
        </authorList>
    </citation>
    <scope>NUCLEOTIDE SEQUENCE [LARGE SCALE GENOMIC DNA]</scope>
    <source>
        <strain>ATCC 27634 / DSM 579 / HB8</strain>
    </source>
</reference>
<feature type="chain" id="PRO_0000129004" description="DNA-directed RNA polymerase subunit omega">
    <location>
        <begin position="1"/>
        <end position="99"/>
    </location>
</feature>
<feature type="sequence conflict" description="In Ref. 1; BAB89402." evidence="2" ref="1">
    <original>V</original>
    <variation>E</variation>
    <location>
        <position position="61"/>
    </location>
</feature>
<feature type="sequence conflict" description="In Ref. 1; BAB89402." evidence="2" ref="1">
    <original>L</original>
    <variation>I</variation>
    <location>
        <position position="92"/>
    </location>
</feature>
<feature type="sequence conflict" description="In Ref. 1; BAB89402." evidence="2" ref="1">
    <original>V</original>
    <variation>G</variation>
    <location>
        <position position="95"/>
    </location>
</feature>
<feature type="helix" evidence="3">
    <location>
        <begin position="6"/>
        <end position="12"/>
    </location>
</feature>
<feature type="strand" evidence="3">
    <location>
        <begin position="13"/>
        <end position="15"/>
    </location>
</feature>
<feature type="helix" evidence="3">
    <location>
        <begin position="16"/>
        <end position="32"/>
    </location>
</feature>
<feature type="turn" evidence="4">
    <location>
        <begin position="33"/>
        <end position="37"/>
    </location>
</feature>
<feature type="strand" evidence="3">
    <location>
        <begin position="42"/>
        <end position="44"/>
    </location>
</feature>
<feature type="strand" evidence="3">
    <location>
        <begin position="49"/>
        <end position="52"/>
    </location>
</feature>
<feature type="helix" evidence="3">
    <location>
        <begin position="53"/>
        <end position="55"/>
    </location>
</feature>
<feature type="strand" evidence="3">
    <location>
        <begin position="56"/>
        <end position="58"/>
    </location>
</feature>
<feature type="helix" evidence="3">
    <location>
        <begin position="61"/>
        <end position="68"/>
    </location>
</feature>
<feature type="turn" evidence="3">
    <location>
        <begin position="69"/>
        <end position="71"/>
    </location>
</feature>
<feature type="strand" evidence="3">
    <location>
        <begin position="74"/>
        <end position="80"/>
    </location>
</feature>
<feature type="helix" evidence="3">
    <location>
        <begin position="84"/>
        <end position="92"/>
    </location>
</feature>
<gene>
    <name evidence="1" type="primary">rpoZ</name>
    <name type="ordered locus">TTHA1561</name>
</gene>
<name>RPOZ_THET8</name>
<accession>Q8RQE7</accession>
<accession>Q5SI19</accession>
<organism>
    <name type="scientific">Thermus thermophilus (strain ATCC 27634 / DSM 579 / HB8)</name>
    <dbReference type="NCBI Taxonomy" id="300852"/>
    <lineage>
        <taxon>Bacteria</taxon>
        <taxon>Thermotogati</taxon>
        <taxon>Deinococcota</taxon>
        <taxon>Deinococci</taxon>
        <taxon>Thermales</taxon>
        <taxon>Thermaceae</taxon>
        <taxon>Thermus</taxon>
    </lineage>
</organism>
<comment type="function">
    <text evidence="1">Promotes RNA polymerase assembly. Latches the N- and C-terminal regions of the beta' subunit thereby facilitating its interaction with the beta and alpha subunits.</text>
</comment>
<comment type="catalytic activity">
    <reaction evidence="1">
        <text>RNA(n) + a ribonucleoside 5'-triphosphate = RNA(n+1) + diphosphate</text>
        <dbReference type="Rhea" id="RHEA:21248"/>
        <dbReference type="Rhea" id="RHEA-COMP:14527"/>
        <dbReference type="Rhea" id="RHEA-COMP:17342"/>
        <dbReference type="ChEBI" id="CHEBI:33019"/>
        <dbReference type="ChEBI" id="CHEBI:61557"/>
        <dbReference type="ChEBI" id="CHEBI:140395"/>
        <dbReference type="EC" id="2.7.7.6"/>
    </reaction>
</comment>
<comment type="subunit">
    <text evidence="1">The RNAP catalytic core consists of 2 alpha, 1 beta, 1 beta' and 1 omega subunit. When a sigma factor is associated with the core the holoenzyme is formed, which can initiate transcription.</text>
</comment>
<comment type="similarity">
    <text evidence="1">Belongs to the RNA polymerase subunit omega family.</text>
</comment>
<dbReference type="EC" id="2.7.7.6" evidence="1"/>
<dbReference type="EMBL" id="AB083791">
    <property type="protein sequence ID" value="BAB89402.1"/>
    <property type="molecule type" value="Genomic_DNA"/>
</dbReference>
<dbReference type="EMBL" id="AP008226">
    <property type="protein sequence ID" value="BAD71384.1"/>
    <property type="molecule type" value="Genomic_DNA"/>
</dbReference>
<dbReference type="RefSeq" id="WP_008633185.1">
    <property type="nucleotide sequence ID" value="NC_006461.1"/>
</dbReference>
<dbReference type="RefSeq" id="YP_144827.1">
    <property type="nucleotide sequence ID" value="NC_006461.1"/>
</dbReference>
<dbReference type="PDB" id="1IW7">
    <property type="method" value="X-ray"/>
    <property type="resolution" value="2.60 A"/>
    <property type="chains" value="E/O=1-99"/>
</dbReference>
<dbReference type="PDB" id="1SMY">
    <property type="method" value="X-ray"/>
    <property type="resolution" value="2.70 A"/>
    <property type="chains" value="E/O=1-99"/>
</dbReference>
<dbReference type="PDB" id="1ZYR">
    <property type="method" value="X-ray"/>
    <property type="resolution" value="3.00 A"/>
    <property type="chains" value="E/O=1-99"/>
</dbReference>
<dbReference type="PDB" id="2A68">
    <property type="method" value="X-ray"/>
    <property type="resolution" value="2.50 A"/>
    <property type="chains" value="E/O=1-99"/>
</dbReference>
<dbReference type="PDB" id="2A69">
    <property type="method" value="X-ray"/>
    <property type="resolution" value="2.50 A"/>
    <property type="chains" value="E/O=1-99"/>
</dbReference>
<dbReference type="PDB" id="2A6E">
    <property type="method" value="X-ray"/>
    <property type="resolution" value="2.80 A"/>
    <property type="chains" value="E/O=1-99"/>
</dbReference>
<dbReference type="PDB" id="2A6H">
    <property type="method" value="X-ray"/>
    <property type="resolution" value="2.40 A"/>
    <property type="chains" value="E/O=1-99"/>
</dbReference>
<dbReference type="PDB" id="2BE5">
    <property type="method" value="X-ray"/>
    <property type="resolution" value="2.40 A"/>
    <property type="chains" value="E/O=1-99"/>
</dbReference>
<dbReference type="PDB" id="2CW0">
    <property type="method" value="X-ray"/>
    <property type="resolution" value="3.30 A"/>
    <property type="chains" value="E/O=1-99"/>
</dbReference>
<dbReference type="PDB" id="2O5I">
    <property type="method" value="X-ray"/>
    <property type="resolution" value="2.50 A"/>
    <property type="chains" value="E/O=1-99"/>
</dbReference>
<dbReference type="PDB" id="2O5J">
    <property type="method" value="X-ray"/>
    <property type="resolution" value="3.00 A"/>
    <property type="chains" value="E/O=1-99"/>
</dbReference>
<dbReference type="PDB" id="2PPB">
    <property type="method" value="X-ray"/>
    <property type="resolution" value="3.00 A"/>
    <property type="chains" value="E/O=1-99"/>
</dbReference>
<dbReference type="PDB" id="3AOH">
    <property type="method" value="X-ray"/>
    <property type="resolution" value="4.10 A"/>
    <property type="chains" value="E/J/O=1-99"/>
</dbReference>
<dbReference type="PDB" id="3AOI">
    <property type="method" value="X-ray"/>
    <property type="resolution" value="4.30 A"/>
    <property type="chains" value="E/J/O=1-99"/>
</dbReference>
<dbReference type="PDB" id="3DXJ">
    <property type="method" value="X-ray"/>
    <property type="resolution" value="3.00 A"/>
    <property type="chains" value="E/O=1-99"/>
</dbReference>
<dbReference type="PDB" id="3EQL">
    <property type="method" value="X-ray"/>
    <property type="resolution" value="2.70 A"/>
    <property type="chains" value="E/O=1-99"/>
</dbReference>
<dbReference type="PDB" id="3WOD">
    <property type="method" value="X-ray"/>
    <property type="resolution" value="3.60 A"/>
    <property type="chains" value="E=1-99"/>
</dbReference>
<dbReference type="PDB" id="4G7H">
    <property type="method" value="X-ray"/>
    <property type="resolution" value="2.90 A"/>
    <property type="chains" value="E/O=1-99"/>
</dbReference>
<dbReference type="PDB" id="4G7O">
    <property type="method" value="X-ray"/>
    <property type="resolution" value="2.99 A"/>
    <property type="chains" value="E/O=1-99"/>
</dbReference>
<dbReference type="PDB" id="4G7Z">
    <property type="method" value="X-ray"/>
    <property type="resolution" value="3.82 A"/>
    <property type="chains" value="E/O=1-99"/>
</dbReference>
<dbReference type="PDB" id="4GZY">
    <property type="method" value="X-ray"/>
    <property type="resolution" value="3.51 A"/>
    <property type="chains" value="E=1-99"/>
</dbReference>
<dbReference type="PDB" id="4GZZ">
    <property type="method" value="X-ray"/>
    <property type="resolution" value="4.29 A"/>
    <property type="chains" value="E=1-99"/>
</dbReference>
<dbReference type="PDB" id="4MQ9">
    <property type="method" value="X-ray"/>
    <property type="resolution" value="3.35 A"/>
    <property type="chains" value="E=1-99"/>
</dbReference>
<dbReference type="PDB" id="4OIN">
    <property type="method" value="X-ray"/>
    <property type="resolution" value="2.80 A"/>
    <property type="chains" value="E=1-99"/>
</dbReference>
<dbReference type="PDB" id="4OIO">
    <property type="method" value="X-ray"/>
    <property type="resolution" value="3.10 A"/>
    <property type="chains" value="E=1-99"/>
</dbReference>
<dbReference type="PDB" id="4OIP">
    <property type="method" value="X-ray"/>
    <property type="resolution" value="3.40 A"/>
    <property type="chains" value="E=1-99"/>
</dbReference>
<dbReference type="PDB" id="4OIQ">
    <property type="method" value="X-ray"/>
    <property type="resolution" value="3.62 A"/>
    <property type="chains" value="E=1-99"/>
</dbReference>
<dbReference type="PDB" id="4OIR">
    <property type="method" value="X-ray"/>
    <property type="resolution" value="3.10 A"/>
    <property type="chains" value="E=1-99"/>
</dbReference>
<dbReference type="PDB" id="4Q4Z">
    <property type="method" value="X-ray"/>
    <property type="resolution" value="2.90 A"/>
    <property type="chains" value="E=1-99"/>
</dbReference>
<dbReference type="PDB" id="4Q5S">
    <property type="method" value="X-ray"/>
    <property type="resolution" value="3.00 A"/>
    <property type="chains" value="E=1-99"/>
</dbReference>
<dbReference type="PDB" id="4WQS">
    <property type="method" value="X-ray"/>
    <property type="resolution" value="4.31 A"/>
    <property type="chains" value="E/O=1-99"/>
</dbReference>
<dbReference type="PDB" id="4WQT">
    <property type="method" value="X-ray"/>
    <property type="resolution" value="4.40 A"/>
    <property type="chains" value="E/J/O=1-99"/>
</dbReference>
<dbReference type="PDB" id="5D4C">
    <property type="method" value="X-ray"/>
    <property type="resolution" value="3.28 A"/>
    <property type="chains" value="E/O=1-99"/>
</dbReference>
<dbReference type="PDB" id="5D4D">
    <property type="method" value="X-ray"/>
    <property type="resolution" value="3.00 A"/>
    <property type="chains" value="E/O=1-99"/>
</dbReference>
<dbReference type="PDB" id="5D4E">
    <property type="method" value="X-ray"/>
    <property type="resolution" value="3.08 A"/>
    <property type="chains" value="E/O=1-99"/>
</dbReference>
<dbReference type="PDB" id="5E17">
    <property type="method" value="X-ray"/>
    <property type="resolution" value="3.20 A"/>
    <property type="chains" value="E=1-99"/>
</dbReference>
<dbReference type="PDB" id="5E18">
    <property type="method" value="X-ray"/>
    <property type="resolution" value="3.30 A"/>
    <property type="chains" value="E=1-99"/>
</dbReference>
<dbReference type="PDB" id="5I2D">
    <property type="method" value="X-ray"/>
    <property type="resolution" value="4.41 A"/>
    <property type="chains" value="E/P=1-99"/>
</dbReference>
<dbReference type="PDB" id="5TMC">
    <property type="method" value="X-ray"/>
    <property type="resolution" value="2.71 A"/>
    <property type="chains" value="E=1-99"/>
</dbReference>
<dbReference type="PDB" id="5TMF">
    <property type="method" value="X-ray"/>
    <property type="resolution" value="3.00 A"/>
    <property type="chains" value="E=1-99"/>
</dbReference>
<dbReference type="PDB" id="5VO8">
    <property type="method" value="X-ray"/>
    <property type="resolution" value="3.30 A"/>
    <property type="chains" value="E=1-99"/>
</dbReference>
<dbReference type="PDB" id="5VOI">
    <property type="method" value="X-ray"/>
    <property type="resolution" value="2.80 A"/>
    <property type="chains" value="E=1-99"/>
</dbReference>
<dbReference type="PDB" id="5X21">
    <property type="method" value="X-ray"/>
    <property type="resolution" value="3.32 A"/>
    <property type="chains" value="E=1-99"/>
</dbReference>
<dbReference type="PDB" id="5X22">
    <property type="method" value="X-ray"/>
    <property type="resolution" value="3.35 A"/>
    <property type="chains" value="E/O=1-99"/>
</dbReference>
<dbReference type="PDB" id="5XJ0">
    <property type="method" value="X-ray"/>
    <property type="resolution" value="4.00 A"/>
    <property type="chains" value="E=1-99"/>
</dbReference>
<dbReference type="PDB" id="6ASG">
    <property type="method" value="X-ray"/>
    <property type="resolution" value="3.80 A"/>
    <property type="chains" value="E=1-99"/>
</dbReference>
<dbReference type="PDB" id="6CUU">
    <property type="method" value="X-ray"/>
    <property type="resolution" value="2.99 A"/>
    <property type="chains" value="E=1-99"/>
</dbReference>
<dbReference type="PDB" id="6KQD">
    <property type="method" value="X-ray"/>
    <property type="resolution" value="3.30 A"/>
    <property type="chains" value="E/O=1-99"/>
</dbReference>
<dbReference type="PDB" id="6KQE">
    <property type="method" value="X-ray"/>
    <property type="resolution" value="3.30 A"/>
    <property type="chains" value="E=1-99"/>
</dbReference>
<dbReference type="PDB" id="6KQF">
    <property type="method" value="X-ray"/>
    <property type="resolution" value="2.45 A"/>
    <property type="chains" value="E=1-99"/>
</dbReference>
<dbReference type="PDB" id="6KQG">
    <property type="method" value="X-ray"/>
    <property type="resolution" value="2.78 A"/>
    <property type="chains" value="E=1-99"/>
</dbReference>
<dbReference type="PDB" id="6KQH">
    <property type="method" value="X-ray"/>
    <property type="resolution" value="3.18 A"/>
    <property type="chains" value="E=1-99"/>
</dbReference>
<dbReference type="PDB" id="6KQL">
    <property type="method" value="X-ray"/>
    <property type="resolution" value="2.89 A"/>
    <property type="chains" value="E=1-99"/>
</dbReference>
<dbReference type="PDB" id="6KQM">
    <property type="method" value="X-ray"/>
    <property type="resolution" value="3.20 A"/>
    <property type="chains" value="E=1-99"/>
</dbReference>
<dbReference type="PDB" id="6KQN">
    <property type="method" value="X-ray"/>
    <property type="resolution" value="3.49 A"/>
    <property type="chains" value="E=1-99"/>
</dbReference>
<dbReference type="PDB" id="6L74">
    <property type="method" value="X-ray"/>
    <property type="resolution" value="3.12 A"/>
    <property type="chains" value="E=1-99"/>
</dbReference>
<dbReference type="PDB" id="6LTS">
    <property type="method" value="X-ray"/>
    <property type="resolution" value="3.45 A"/>
    <property type="chains" value="E=1-99"/>
</dbReference>
<dbReference type="PDB" id="6M6A">
    <property type="method" value="EM"/>
    <property type="resolution" value="5.00 A"/>
    <property type="chains" value="E=1-99"/>
</dbReference>
<dbReference type="PDB" id="6M6B">
    <property type="method" value="EM"/>
    <property type="resolution" value="4.10 A"/>
    <property type="chains" value="E=1-99"/>
</dbReference>
<dbReference type="PDB" id="6M6C">
    <property type="method" value="EM"/>
    <property type="resolution" value="3.10 A"/>
    <property type="chains" value="E=1-99"/>
</dbReference>
<dbReference type="PDB" id="6OVR">
    <property type="method" value="X-ray"/>
    <property type="resolution" value="2.84 A"/>
    <property type="chains" value="E=1-99"/>
</dbReference>
<dbReference type="PDB" id="6OVY">
    <property type="method" value="X-ray"/>
    <property type="resolution" value="3.00 A"/>
    <property type="chains" value="E=1-99"/>
</dbReference>
<dbReference type="PDB" id="6OW3">
    <property type="method" value="X-ray"/>
    <property type="resolution" value="2.77 A"/>
    <property type="chains" value="E=1-99"/>
</dbReference>
<dbReference type="PDB" id="6OY5">
    <property type="method" value="X-ray"/>
    <property type="resolution" value="3.10 A"/>
    <property type="chains" value="E=1-99"/>
</dbReference>
<dbReference type="PDB" id="6OY6">
    <property type="method" value="X-ray"/>
    <property type="resolution" value="3.10 A"/>
    <property type="chains" value="E=1-99"/>
</dbReference>
<dbReference type="PDB" id="6OY7">
    <property type="method" value="X-ray"/>
    <property type="resolution" value="3.04 A"/>
    <property type="chains" value="E=1-99"/>
</dbReference>
<dbReference type="PDB" id="6P70">
    <property type="method" value="X-ray"/>
    <property type="resolution" value="3.05 A"/>
    <property type="chains" value="E=1-99"/>
</dbReference>
<dbReference type="PDB" id="6P71">
    <property type="method" value="X-ray"/>
    <property type="resolution" value="2.92 A"/>
    <property type="chains" value="E=1-99"/>
</dbReference>
<dbReference type="PDB" id="6WOX">
    <property type="method" value="X-ray"/>
    <property type="resolution" value="3.14 A"/>
    <property type="chains" value="E=1-99"/>
</dbReference>
<dbReference type="PDB" id="6WOY">
    <property type="method" value="X-ray"/>
    <property type="resolution" value="3.00 A"/>
    <property type="chains" value="E=1-99"/>
</dbReference>
<dbReference type="PDB" id="7EH0">
    <property type="method" value="X-ray"/>
    <property type="resolution" value="2.81 A"/>
    <property type="chains" value="E=1-99"/>
</dbReference>
<dbReference type="PDB" id="7EH1">
    <property type="method" value="X-ray"/>
    <property type="resolution" value="2.90 A"/>
    <property type="chains" value="E=1-99"/>
</dbReference>
<dbReference type="PDB" id="7EH2">
    <property type="method" value="X-ray"/>
    <property type="resolution" value="3.34 A"/>
    <property type="chains" value="E/O=1-99"/>
</dbReference>
<dbReference type="PDB" id="7MLB">
    <property type="method" value="X-ray"/>
    <property type="resolution" value="3.60 A"/>
    <property type="chains" value="E=1-99"/>
</dbReference>
<dbReference type="PDB" id="7MLI">
    <property type="method" value="X-ray"/>
    <property type="resolution" value="3.60 A"/>
    <property type="chains" value="E=1-99"/>
</dbReference>
<dbReference type="PDB" id="7MLJ">
    <property type="method" value="X-ray"/>
    <property type="resolution" value="3.75 A"/>
    <property type="chains" value="E=1-99"/>
</dbReference>
<dbReference type="PDB" id="7RDQ">
    <property type="method" value="EM"/>
    <property type="resolution" value="3.00 A"/>
    <property type="chains" value="E=1-99"/>
</dbReference>
<dbReference type="PDB" id="8HSG">
    <property type="method" value="EM"/>
    <property type="resolution" value="3.20 A"/>
    <property type="chains" value="K=1-99"/>
</dbReference>
<dbReference type="PDB" id="8HSH">
    <property type="method" value="EM"/>
    <property type="resolution" value="3.40 A"/>
    <property type="chains" value="K=1-99"/>
</dbReference>
<dbReference type="PDB" id="8HSL">
    <property type="method" value="EM"/>
    <property type="resolution" value="5.80 A"/>
    <property type="chains" value="K=1-99"/>
</dbReference>
<dbReference type="PDB" id="8HSR">
    <property type="method" value="EM"/>
    <property type="resolution" value="4.00 A"/>
    <property type="chains" value="K=1-99"/>
</dbReference>
<dbReference type="PDB" id="8W8N">
    <property type="method" value="X-ray"/>
    <property type="resolution" value="2.69 A"/>
    <property type="chains" value="E=1-99"/>
</dbReference>
<dbReference type="PDB" id="8W8O">
    <property type="method" value="X-ray"/>
    <property type="resolution" value="2.51 A"/>
    <property type="chains" value="E=1-99"/>
</dbReference>
<dbReference type="PDB" id="8W8P">
    <property type="method" value="X-ray"/>
    <property type="resolution" value="3.17 A"/>
    <property type="chains" value="E=1-99"/>
</dbReference>
<dbReference type="PDBsum" id="1IW7"/>
<dbReference type="PDBsum" id="1SMY"/>
<dbReference type="PDBsum" id="1ZYR"/>
<dbReference type="PDBsum" id="2A68"/>
<dbReference type="PDBsum" id="2A69"/>
<dbReference type="PDBsum" id="2A6E"/>
<dbReference type="PDBsum" id="2A6H"/>
<dbReference type="PDBsum" id="2BE5"/>
<dbReference type="PDBsum" id="2CW0"/>
<dbReference type="PDBsum" id="2O5I"/>
<dbReference type="PDBsum" id="2O5J"/>
<dbReference type="PDBsum" id="2PPB"/>
<dbReference type="PDBsum" id="3AOH"/>
<dbReference type="PDBsum" id="3AOI"/>
<dbReference type="PDBsum" id="3DXJ"/>
<dbReference type="PDBsum" id="3EQL"/>
<dbReference type="PDBsum" id="3WOD"/>
<dbReference type="PDBsum" id="4G7H"/>
<dbReference type="PDBsum" id="4G7O"/>
<dbReference type="PDBsum" id="4G7Z"/>
<dbReference type="PDBsum" id="4GZY"/>
<dbReference type="PDBsum" id="4GZZ"/>
<dbReference type="PDBsum" id="4MQ9"/>
<dbReference type="PDBsum" id="4OIN"/>
<dbReference type="PDBsum" id="4OIO"/>
<dbReference type="PDBsum" id="4OIP"/>
<dbReference type="PDBsum" id="4OIQ"/>
<dbReference type="PDBsum" id="4OIR"/>
<dbReference type="PDBsum" id="4Q4Z"/>
<dbReference type="PDBsum" id="4Q5S"/>
<dbReference type="PDBsum" id="4WQS"/>
<dbReference type="PDBsum" id="4WQT"/>
<dbReference type="PDBsum" id="5D4C"/>
<dbReference type="PDBsum" id="5D4D"/>
<dbReference type="PDBsum" id="5D4E"/>
<dbReference type="PDBsum" id="5E17"/>
<dbReference type="PDBsum" id="5E18"/>
<dbReference type="PDBsum" id="5I2D"/>
<dbReference type="PDBsum" id="5TMC"/>
<dbReference type="PDBsum" id="5TMF"/>
<dbReference type="PDBsum" id="5VO8"/>
<dbReference type="PDBsum" id="5VOI"/>
<dbReference type="PDBsum" id="5X21"/>
<dbReference type="PDBsum" id="5X22"/>
<dbReference type="PDBsum" id="5XJ0"/>
<dbReference type="PDBsum" id="6ASG"/>
<dbReference type="PDBsum" id="6CUU"/>
<dbReference type="PDBsum" id="6KQD"/>
<dbReference type="PDBsum" id="6KQE"/>
<dbReference type="PDBsum" id="6KQF"/>
<dbReference type="PDBsum" id="6KQG"/>
<dbReference type="PDBsum" id="6KQH"/>
<dbReference type="PDBsum" id="6KQL"/>
<dbReference type="PDBsum" id="6KQM"/>
<dbReference type="PDBsum" id="6KQN"/>
<dbReference type="PDBsum" id="6L74"/>
<dbReference type="PDBsum" id="6LTS"/>
<dbReference type="PDBsum" id="6M6A"/>
<dbReference type="PDBsum" id="6M6B"/>
<dbReference type="PDBsum" id="6M6C"/>
<dbReference type="PDBsum" id="6OVR"/>
<dbReference type="PDBsum" id="6OVY"/>
<dbReference type="PDBsum" id="6OW3"/>
<dbReference type="PDBsum" id="6OY5"/>
<dbReference type="PDBsum" id="6OY6"/>
<dbReference type="PDBsum" id="6OY7"/>
<dbReference type="PDBsum" id="6P70"/>
<dbReference type="PDBsum" id="6P71"/>
<dbReference type="PDBsum" id="6WOX"/>
<dbReference type="PDBsum" id="6WOY"/>
<dbReference type="PDBsum" id="7EH0"/>
<dbReference type="PDBsum" id="7EH1"/>
<dbReference type="PDBsum" id="7EH2"/>
<dbReference type="PDBsum" id="7MLB"/>
<dbReference type="PDBsum" id="7MLI"/>
<dbReference type="PDBsum" id="7MLJ"/>
<dbReference type="PDBsum" id="7RDQ"/>
<dbReference type="PDBsum" id="8HSG"/>
<dbReference type="PDBsum" id="8HSH"/>
<dbReference type="PDBsum" id="8HSL"/>
<dbReference type="PDBsum" id="8HSR"/>
<dbReference type="PDBsum" id="8W8N"/>
<dbReference type="PDBsum" id="8W8O"/>
<dbReference type="PDBsum" id="8W8P"/>
<dbReference type="EMDB" id="EMD-24424"/>
<dbReference type="EMDB" id="EMD-30117"/>
<dbReference type="EMDB" id="EMD-30118"/>
<dbReference type="EMDB" id="EMD-30119"/>
<dbReference type="EMDB" id="EMD-34996"/>
<dbReference type="EMDB" id="EMD-34997"/>
<dbReference type="EMDB" id="EMD-35000"/>
<dbReference type="EMDB" id="EMD-35004"/>
<dbReference type="SMR" id="Q8RQE7"/>
<dbReference type="DIP" id="DIP-47008N"/>
<dbReference type="IntAct" id="Q8RQE7">
    <property type="interactions" value="5"/>
</dbReference>
<dbReference type="DrugBank" id="DB08266">
    <property type="generic name" value="Methyl [(1E,5R)-5-{3-[(2E,4E)-2,5-dimethyl-2,4-octadienoyl]-2,4-dioxo-3,4-dihydro-2H-pyran-6-yl}hexylidene]carbamate"/>
</dbReference>
<dbReference type="DrugBank" id="DB08226">
    <property type="generic name" value="Myxopyronin B"/>
</dbReference>
<dbReference type="EnsemblBacteria" id="BAD71384">
    <property type="protein sequence ID" value="BAD71384"/>
    <property type="gene ID" value="BAD71384"/>
</dbReference>
<dbReference type="GeneID" id="3169896"/>
<dbReference type="KEGG" id="ttj:TTHA1561"/>
<dbReference type="PATRIC" id="fig|300852.9.peg.1532"/>
<dbReference type="eggNOG" id="COG1758">
    <property type="taxonomic scope" value="Bacteria"/>
</dbReference>
<dbReference type="HOGENOM" id="CLU_2319205_0_0_0"/>
<dbReference type="BRENDA" id="2.7.7.6">
    <property type="organism ID" value="2305"/>
</dbReference>
<dbReference type="EvolutionaryTrace" id="Q8RQE7"/>
<dbReference type="Proteomes" id="UP000000532">
    <property type="component" value="Chromosome"/>
</dbReference>
<dbReference type="GO" id="GO:0000428">
    <property type="term" value="C:DNA-directed RNA polymerase complex"/>
    <property type="evidence" value="ECO:0007669"/>
    <property type="project" value="UniProtKB-KW"/>
</dbReference>
<dbReference type="GO" id="GO:0003677">
    <property type="term" value="F:DNA binding"/>
    <property type="evidence" value="ECO:0007669"/>
    <property type="project" value="UniProtKB-UniRule"/>
</dbReference>
<dbReference type="GO" id="GO:0003899">
    <property type="term" value="F:DNA-directed RNA polymerase activity"/>
    <property type="evidence" value="ECO:0007669"/>
    <property type="project" value="UniProtKB-UniRule"/>
</dbReference>
<dbReference type="GO" id="GO:0006351">
    <property type="term" value="P:DNA-templated transcription"/>
    <property type="evidence" value="ECO:0007669"/>
    <property type="project" value="UniProtKB-UniRule"/>
</dbReference>
<dbReference type="Gene3D" id="3.90.940.10">
    <property type="match status" value="1"/>
</dbReference>
<dbReference type="HAMAP" id="MF_00366">
    <property type="entry name" value="RNApol_bact_RpoZ"/>
    <property type="match status" value="1"/>
</dbReference>
<dbReference type="InterPro" id="IPR003716">
    <property type="entry name" value="DNA-dir_RNA_pol_omega"/>
</dbReference>
<dbReference type="InterPro" id="IPR006110">
    <property type="entry name" value="Pol_omega/Rpo6/RPB6"/>
</dbReference>
<dbReference type="InterPro" id="IPR036161">
    <property type="entry name" value="RPB6/omega-like_sf"/>
</dbReference>
<dbReference type="NCBIfam" id="TIGR00690">
    <property type="entry name" value="rpoZ"/>
    <property type="match status" value="1"/>
</dbReference>
<dbReference type="Pfam" id="PF01192">
    <property type="entry name" value="RNA_pol_Rpb6"/>
    <property type="match status" value="1"/>
</dbReference>
<dbReference type="SMART" id="SM01409">
    <property type="entry name" value="RNA_pol_Rpb6"/>
    <property type="match status" value="1"/>
</dbReference>
<dbReference type="SUPFAM" id="SSF63562">
    <property type="entry name" value="RPB6/omega subunit-like"/>
    <property type="match status" value="1"/>
</dbReference>